<sequence>MNSVPVMLFSISILLAAMLTEGRGLTQTQKESIFSAEHKSDLKSYLEMLVCRRLRDVPESVIHISKVSKEILPDDLLSTYLLELLVCFDKDKLVQSKGIVFNTIKRLLTNT</sequence>
<organism>
    <name type="scientific">Mus musculus</name>
    <name type="common">Mouse</name>
    <dbReference type="NCBI Taxonomy" id="10090"/>
    <lineage>
        <taxon>Eukaryota</taxon>
        <taxon>Metazoa</taxon>
        <taxon>Chordata</taxon>
        <taxon>Craniata</taxon>
        <taxon>Vertebrata</taxon>
        <taxon>Euteleostomi</taxon>
        <taxon>Mammalia</taxon>
        <taxon>Eutheria</taxon>
        <taxon>Euarchontoglires</taxon>
        <taxon>Glires</taxon>
        <taxon>Rodentia</taxon>
        <taxon>Myomorpha</taxon>
        <taxon>Muroidea</taxon>
        <taxon>Muridae</taxon>
        <taxon>Murinae</taxon>
        <taxon>Mus</taxon>
        <taxon>Mus</taxon>
    </lineage>
</organism>
<keyword id="KW-0085">Behavior</keyword>
<keyword id="KW-0588">Pheromone</keyword>
<keyword id="KW-1185">Reference proteome</keyword>
<keyword id="KW-0964">Secreted</keyword>
<keyword id="KW-0732">Signal</keyword>
<gene>
    <name evidence="5" type="primary">Esp22</name>
</gene>
<feature type="signal peptide" evidence="1">
    <location>
        <begin position="1"/>
        <end position="24"/>
    </location>
</feature>
<feature type="chain" id="PRO_0000424701" description="Exocrine gland-secreted peptide 22">
    <location>
        <begin position="25"/>
        <end position="111"/>
    </location>
</feature>
<evidence type="ECO:0000255" key="1"/>
<evidence type="ECO:0000269" key="2">
    <source>
    </source>
</evidence>
<evidence type="ECO:0000269" key="3">
    <source>
    </source>
</evidence>
<evidence type="ECO:0000305" key="4"/>
<evidence type="ECO:0000312" key="5">
    <source>
        <dbReference type="EMBL" id="BAF92737.1"/>
    </source>
</evidence>
<protein>
    <recommendedName>
        <fullName>Exocrine gland-secreted peptide 22</fullName>
    </recommendedName>
</protein>
<accession>A8R0V4</accession>
<comment type="function">
    <text evidence="3">Pheromone produced by juveniles which activates a small number of vomeronasal organ sensory neurons and exhibits a powerful inhibitory effect on adult male mating behavior.</text>
</comment>
<comment type="subcellular location">
    <subcellularLocation>
        <location evidence="3">Secreted</location>
    </subcellularLocation>
    <text evidence="3">Secreted from the lacrimal gland into tears.</text>
</comment>
<comment type="tissue specificity">
    <text evidence="3">Expressed in acinar cells of the lacrimal gland from where it is secreted into tears. Not detected in a range of other tissues tested including other exocrine glands, internal organs and sensory epithelia.</text>
</comment>
<comment type="developmental stage">
    <text evidence="3">Expressed maximally between 2 and 3 weeks of age. Levels decrease sharply after 4 weeks around puberty. Expression is 50-fold higher in juveniles than adults with similar levels in male and female juveniles. Not expressed in castrated or ovariectomized adults.</text>
</comment>
<comment type="polymorphism">
    <text evidence="3">Highly expressed in juveniles of strains BALB/C and C56BL/5 but expression is not detected in juveniles of strains CBA or C3H/He.</text>
</comment>
<comment type="similarity">
    <text evidence="4">Belongs to the exocrine gland-secreted peptide family.</text>
</comment>
<name>ESP22_MOUSE</name>
<dbReference type="EMBL" id="AB307001">
    <property type="protein sequence ID" value="BAF92737.1"/>
    <property type="molecule type" value="Genomic_DNA"/>
</dbReference>
<dbReference type="EMBL" id="AC127274">
    <property type="status" value="NOT_ANNOTATED_CDS"/>
    <property type="molecule type" value="Genomic_DNA"/>
</dbReference>
<dbReference type="SMR" id="A8R0V4"/>
<dbReference type="FunCoup" id="A8R0V4">
    <property type="interactions" value="585"/>
</dbReference>
<dbReference type="STRING" id="10090.ENSMUSP00000156441"/>
<dbReference type="Ensembl" id="ENSMUST00000233133.2">
    <property type="protein sequence ID" value="ENSMUSP00000156441.2"/>
    <property type="gene ID" value="ENSMUSG00000117311.2"/>
</dbReference>
<dbReference type="AGR" id="MGI:5510833"/>
<dbReference type="MGI" id="MGI:5510833">
    <property type="gene designation" value="Esp22"/>
</dbReference>
<dbReference type="VEuPathDB" id="HostDB:ENSMUSG00000117311"/>
<dbReference type="GeneTree" id="ENSGT01030000239647"/>
<dbReference type="InParanoid" id="A8R0V4"/>
<dbReference type="OrthoDB" id="10454230at2759"/>
<dbReference type="PRO" id="PR:A8R0V4"/>
<dbReference type="Proteomes" id="UP000000589">
    <property type="component" value="Chromosome 17"/>
</dbReference>
<dbReference type="RNAct" id="A8R0V4">
    <property type="molecule type" value="protein"/>
</dbReference>
<dbReference type="Bgee" id="ENSMUSG00000117311">
    <property type="expression patterns" value="Expressed in digestive system element and 5 other cell types or tissues"/>
</dbReference>
<dbReference type="GO" id="GO:0005615">
    <property type="term" value="C:extracellular space"/>
    <property type="evidence" value="ECO:0000314"/>
    <property type="project" value="UniProtKB"/>
</dbReference>
<dbReference type="GO" id="GO:0005186">
    <property type="term" value="F:pheromone activity"/>
    <property type="evidence" value="ECO:0000314"/>
    <property type="project" value="UniProtKB"/>
</dbReference>
<dbReference type="GO" id="GO:1902436">
    <property type="term" value="P:negative regulation of male mating behavior"/>
    <property type="evidence" value="ECO:0000314"/>
    <property type="project" value="UniProtKB"/>
</dbReference>
<dbReference type="CDD" id="cd14248">
    <property type="entry name" value="ESP"/>
    <property type="match status" value="1"/>
</dbReference>
<dbReference type="InterPro" id="IPR032253">
    <property type="entry name" value="Esp1/Esp22"/>
</dbReference>
<dbReference type="Pfam" id="PF16590">
    <property type="entry name" value="ESP"/>
    <property type="match status" value="1"/>
</dbReference>
<proteinExistence type="evidence at protein level"/>
<reference evidence="5" key="1">
    <citation type="journal article" date="2007" name="Curr. Biol.">
        <title>Sex- and strain-specific expression and vomeronasal activity of mouse ESP family peptides.</title>
        <authorList>
            <person name="Kimoto H."/>
            <person name="Sato K."/>
            <person name="Nodari F."/>
            <person name="Haga S."/>
            <person name="Holy T.E."/>
            <person name="Touhara K."/>
        </authorList>
    </citation>
    <scope>NUCLEOTIDE SEQUENCE [GENOMIC DNA]</scope>
    <source>
        <strain evidence="5">C57BL/6J</strain>
    </source>
</reference>
<reference evidence="4" key="2">
    <citation type="journal article" date="2009" name="PLoS Biol.">
        <title>Lineage-specific biology revealed by a finished genome assembly of the mouse.</title>
        <authorList>
            <person name="Church D.M."/>
            <person name="Goodstadt L."/>
            <person name="Hillier L.W."/>
            <person name="Zody M.C."/>
            <person name="Goldstein S."/>
            <person name="She X."/>
            <person name="Bult C.J."/>
            <person name="Agarwala R."/>
            <person name="Cherry J.L."/>
            <person name="DiCuccio M."/>
            <person name="Hlavina W."/>
            <person name="Kapustin Y."/>
            <person name="Meric P."/>
            <person name="Maglott D."/>
            <person name="Birtle Z."/>
            <person name="Marques A.C."/>
            <person name="Graves T."/>
            <person name="Zhou S."/>
            <person name="Teague B."/>
            <person name="Potamousis K."/>
            <person name="Churas C."/>
            <person name="Place M."/>
            <person name="Herschleb J."/>
            <person name="Runnheim R."/>
            <person name="Forrest D."/>
            <person name="Amos-Landgraf J."/>
            <person name="Schwartz D.C."/>
            <person name="Cheng Z."/>
            <person name="Lindblad-Toh K."/>
            <person name="Eichler E.E."/>
            <person name="Ponting C.P."/>
        </authorList>
    </citation>
    <scope>NUCLEOTIDE SEQUENCE [LARGE SCALE GENOMIC DNA]</scope>
    <source>
        <strain evidence="2">C57BL/6J</strain>
    </source>
</reference>
<reference evidence="4" key="3">
    <citation type="journal article" date="2013" name="Nature">
        <title>A juvenile mouse pheromone inhibits sexual behaviour through the vomeronasal system.</title>
        <authorList>
            <person name="Ferrero D.M."/>
            <person name="Moeller L.M."/>
            <person name="Osakada T."/>
            <person name="Horio N."/>
            <person name="Li Q."/>
            <person name="Roy D.S."/>
            <person name="Cichy A."/>
            <person name="Spehr M."/>
            <person name="Touhara K."/>
            <person name="Liberles S.D."/>
        </authorList>
    </citation>
    <scope>FUNCTION</scope>
    <scope>SUBCELLULAR LOCATION</scope>
    <scope>TISSUE SPECIFICITY</scope>
    <scope>DEVELOPMENTAL STAGE</scope>
    <scope>POLYMORPHISM</scope>
    <scope>IDENTIFICATION BY MASS SPECTROMETRY</scope>
</reference>